<evidence type="ECO:0000255" key="1">
    <source>
        <dbReference type="HAMAP-Rule" id="MF_03184"/>
    </source>
</evidence>
<comment type="function">
    <text>Catalyzes the phosphorylation of D-fructose 6-phosphate to fructose 1,6-bisphosphate by ATP, the first committing step of glycolysis.</text>
</comment>
<comment type="catalytic activity">
    <reaction evidence="1">
        <text>beta-D-fructose 6-phosphate + ATP = beta-D-fructose 1,6-bisphosphate + ADP + H(+)</text>
        <dbReference type="Rhea" id="RHEA:16109"/>
        <dbReference type="ChEBI" id="CHEBI:15378"/>
        <dbReference type="ChEBI" id="CHEBI:30616"/>
        <dbReference type="ChEBI" id="CHEBI:32966"/>
        <dbReference type="ChEBI" id="CHEBI:57634"/>
        <dbReference type="ChEBI" id="CHEBI:456216"/>
        <dbReference type="EC" id="2.7.1.11"/>
    </reaction>
</comment>
<comment type="cofactor">
    <cofactor evidence="1">
        <name>Mg(2+)</name>
        <dbReference type="ChEBI" id="CHEBI:18420"/>
    </cofactor>
</comment>
<comment type="activity regulation">
    <text evidence="1">Allosterically activated by ADP, AMP, or fructose 2,6-bisphosphate, and allosterically inhibited by ATP or citrate.</text>
</comment>
<comment type="pathway">
    <text evidence="1">Carbohydrate degradation; glycolysis; D-glyceraldehyde 3-phosphate and glycerone phosphate from D-glucose: step 3/4.</text>
</comment>
<comment type="subunit">
    <text evidence="1">Heterooctamer of 4 alpha and 4 beta chains.</text>
</comment>
<comment type="subcellular location">
    <subcellularLocation>
        <location evidence="1">Cytoplasm</location>
    </subcellularLocation>
</comment>
<comment type="similarity">
    <text evidence="1">Belongs to the phosphofructokinase type A (PFKA) family. ATP-dependent PFK group I subfamily. Eukaryotic two domain clade 'E' sub-subfamily.</text>
</comment>
<reference key="1">
    <citation type="journal article" date="1999" name="Eur. J. Biochem.">
        <title>Genetic and biochemical characterization of phosphofructokinase from the opportunistic pathogenic yeast Candida albicans.</title>
        <authorList>
            <person name="Lorberg A."/>
            <person name="Kirchrath L."/>
            <person name="Ernst J.F."/>
            <person name="Heinisch J.J."/>
        </authorList>
    </citation>
    <scope>NUCLEOTIDE SEQUENCE [GENOMIC DNA]</scope>
    <scope>CHARACTERIZATION</scope>
    <source>
        <strain>ATCC 10231 / CBS 6431 / CIP 48.72 / DSM 1386 / NBRC 1594</strain>
    </source>
</reference>
<gene>
    <name type="primary">PFK2</name>
</gene>
<proteinExistence type="evidence at protein level"/>
<sequence>MISIVNGTSTLSLVAGSVETLNQAINFYTNILGLSVHSEQNDWTYLSNDDNKMIVKIQLDTKSGLSLDQVNDRRTEIIAKLNVTDWRSLDTTSVLKVQNLVALIETLTTFNYTLQITPNELYPNEVYCVGPIGYIIGFTACDEPLTLVPPLQKSHPKPGLVSNLMSKSGSQSRNIEETKAVRRNIAVMTSGGDSQGMNAAVRAVVRATIFHGSKAFAVQEGYAGLVKGGPEYIKEMKWQDVRGFLSEGGTNIGTARCMEFKERWGRLKGCKNLIDAGIDGLIVCGGDGSLTGADLFRHEWPSLIQELKDKGEITNEQFERHKHLYICGMVGSIDNDMAMTDATIGGYSALERICRAIDYIDATANSHSRAFVVEVMGRHCGWLALMAGIATSADYIFIPEKPASSKDWQDQMCDIVGKHRAQGKRKTIVIVAEGAITSDLKPITSDEVKDVLVDRLGLDTRITVLGHVQRGGTAVAFDRTLATLQGVEAVKAILELTPDVPSPLIAIDENKICRRPLVEAVRITKSVASAIEAKDFEKAMSLRDHEFKEHLANFMAMNTANHEKPTLPREKRKKIAIINIGAPAGGMNSAVYAMATYCMSRGHTPYAIHNGFAGLSRHESVKSIEWIDIEGWNSIGGSEIGTNRQTPEETDIGMIAHYFEKYQFDGLIIVGGFEAFVSLEQLERSRAMYPSFRIPMVLIPATISNNVPGTEYSLGADTCLNSLMEYCDIVKQSASATRGTAFIIDVQGGNSGYIATFASLISGAQASYVPEEGISLQQLEMDINSLREAFAVEQGMTKSGKLIIKSSNASKVLTPHTLADIFNDECHGDFDTKTAIPGHVQQGGLPSPIDRSRGDRFAIRAVQFIEDHCDVLAPYRYELDFPIDDKKILNTAAVLGIKSSRLRFTSIRHLFDFETELGRRMPKTIYWNTIRDISDQLVGRTRLDKP</sequence>
<organism>
    <name type="scientific">Candida albicans</name>
    <name type="common">Yeast</name>
    <dbReference type="NCBI Taxonomy" id="5476"/>
    <lineage>
        <taxon>Eukaryota</taxon>
        <taxon>Fungi</taxon>
        <taxon>Dikarya</taxon>
        <taxon>Ascomycota</taxon>
        <taxon>Saccharomycotina</taxon>
        <taxon>Pichiomycetes</taxon>
        <taxon>Debaryomycetaceae</taxon>
        <taxon>Candida/Lodderomyces clade</taxon>
        <taxon>Candida</taxon>
    </lineage>
</organism>
<keyword id="KW-0021">Allosteric enzyme</keyword>
<keyword id="KW-0067">ATP-binding</keyword>
<keyword id="KW-0963">Cytoplasm</keyword>
<keyword id="KW-0324">Glycolysis</keyword>
<keyword id="KW-0418">Kinase</keyword>
<keyword id="KW-0460">Magnesium</keyword>
<keyword id="KW-0479">Metal-binding</keyword>
<keyword id="KW-0547">Nucleotide-binding</keyword>
<keyword id="KW-0808">Transferase</keyword>
<protein>
    <recommendedName>
        <fullName evidence="1">ATP-dependent 6-phosphofructokinase subunit beta</fullName>
        <ecNumber evidence="1">2.7.1.11</ecNumber>
    </recommendedName>
    <alternativeName>
        <fullName evidence="1">ATP-dependent 6-phosphofructokinase 2</fullName>
        <shortName evidence="1">ATP-PFK 2</shortName>
        <shortName evidence="1">Phosphofructokinase 2</shortName>
    </alternativeName>
    <alternativeName>
        <fullName evidence="1">Phosphohexokinase 2</fullName>
    </alternativeName>
</protein>
<name>PFKA2_CANAX</name>
<feature type="chain" id="PRO_0000112039" description="ATP-dependent 6-phosphofructokinase subunit beta">
    <location>
        <begin position="1"/>
        <end position="946"/>
    </location>
</feature>
<feature type="region of interest" description="N-terminal catalytic PFK domain 1">
    <location>
        <begin position="1"/>
        <end position="559"/>
    </location>
</feature>
<feature type="region of interest" description="Interdomain linker">
    <location>
        <begin position="560"/>
        <end position="573"/>
    </location>
</feature>
<feature type="region of interest" description="C-terminal regulatory PFK domain 2">
    <location>
        <begin position="574"/>
        <end position="946"/>
    </location>
</feature>
<feature type="active site" description="Proton acceptor" evidence="1">
    <location>
        <position position="334"/>
    </location>
</feature>
<feature type="binding site" evidence="1">
    <location>
        <position position="192"/>
    </location>
    <ligand>
        <name>ATP</name>
        <dbReference type="ChEBI" id="CHEBI:30616"/>
    </ligand>
</feature>
<feature type="binding site" evidence="1">
    <location>
        <begin position="256"/>
        <end position="257"/>
    </location>
    <ligand>
        <name>ATP</name>
        <dbReference type="ChEBI" id="CHEBI:30616"/>
    </ligand>
</feature>
<feature type="binding site" evidence="1">
    <location>
        <begin position="286"/>
        <end position="289"/>
    </location>
    <ligand>
        <name>ATP</name>
        <dbReference type="ChEBI" id="CHEBI:30616"/>
    </ligand>
</feature>
<feature type="binding site" evidence="1">
    <location>
        <position position="287"/>
    </location>
    <ligand>
        <name>Mg(2+)</name>
        <dbReference type="ChEBI" id="CHEBI:18420"/>
        <note>catalytic</note>
    </ligand>
</feature>
<feature type="binding site" evidence="1">
    <location>
        <begin position="332"/>
        <end position="334"/>
    </location>
    <ligand>
        <name>beta-D-fructose 6-phosphate</name>
        <dbReference type="ChEBI" id="CHEBI:57634"/>
        <label>2</label>
        <note>ligand shared with subunit alpha</note>
    </ligand>
</feature>
<feature type="binding site" evidence="1">
    <location>
        <position position="369"/>
    </location>
    <ligand>
        <name>beta-D-fructose 6-phosphate</name>
        <dbReference type="ChEBI" id="CHEBI:57634"/>
        <label>1</label>
        <note>ligand shared with subunit alpha</note>
    </ligand>
</feature>
<feature type="binding site" evidence="1">
    <location>
        <begin position="376"/>
        <end position="378"/>
    </location>
    <ligand>
        <name>beta-D-fructose 6-phosphate</name>
        <dbReference type="ChEBI" id="CHEBI:57634"/>
        <label>2</label>
        <note>ligand shared with subunit alpha</note>
    </ligand>
</feature>
<feature type="binding site" evidence="1">
    <location>
        <position position="433"/>
    </location>
    <ligand>
        <name>beta-D-fructose 6-phosphate</name>
        <dbReference type="ChEBI" id="CHEBI:57634"/>
        <label>2</label>
        <note>ligand shared with subunit alpha</note>
    </ligand>
</feature>
<feature type="binding site" evidence="1">
    <location>
        <position position="461"/>
    </location>
    <ligand>
        <name>beta-D-fructose 6-phosphate</name>
        <dbReference type="ChEBI" id="CHEBI:57634"/>
        <label>1</label>
        <note>ligand shared with subunit alpha</note>
    </ligand>
</feature>
<feature type="binding site" evidence="1">
    <location>
        <begin position="467"/>
        <end position="470"/>
    </location>
    <ligand>
        <name>beta-D-fructose 6-phosphate</name>
        <dbReference type="ChEBI" id="CHEBI:57634"/>
        <label>2</label>
        <note>ligand shared with subunit alpha</note>
    </ligand>
</feature>
<feature type="binding site" evidence="1">
    <location>
        <position position="644"/>
    </location>
    <ligand>
        <name>beta-D-fructose 2,6-bisphosphate</name>
        <dbReference type="ChEBI" id="CHEBI:58579"/>
        <label>2</label>
        <note>allosteric activator; ligand shared with subunit alpha</note>
    </ligand>
</feature>
<feature type="binding site" evidence="1">
    <location>
        <begin position="702"/>
        <end position="706"/>
    </location>
    <ligand>
        <name>beta-D-fructose 2,6-bisphosphate</name>
        <dbReference type="ChEBI" id="CHEBI:58579"/>
        <label>2</label>
        <note>allosteric activator; ligand shared with subunit alpha</note>
    </ligand>
</feature>
<feature type="binding site" evidence="1">
    <location>
        <begin position="747"/>
        <end position="749"/>
    </location>
    <ligand>
        <name>beta-D-fructose 2,6-bisphosphate</name>
        <dbReference type="ChEBI" id="CHEBI:58579"/>
        <label>2</label>
        <note>allosteric activator; ligand shared with subunit alpha</note>
    </ligand>
</feature>
<feature type="binding site" evidence="1">
    <location>
        <position position="833"/>
    </location>
    <ligand>
        <name>beta-D-fructose 2,6-bisphosphate</name>
        <dbReference type="ChEBI" id="CHEBI:58579"/>
        <label>1</label>
        <note>allosteric activator; ligand shared with subunit alpha</note>
    </ligand>
</feature>
<feature type="binding site" evidence="1">
    <location>
        <begin position="839"/>
        <end position="842"/>
    </location>
    <ligand>
        <name>beta-D-fructose 2,6-bisphosphate</name>
        <dbReference type="ChEBI" id="CHEBI:58579"/>
        <label>2</label>
        <note>allosteric activator; ligand shared with subunit alpha</note>
    </ligand>
</feature>
<feature type="binding site" evidence="1">
    <location>
        <position position="920"/>
    </location>
    <ligand>
        <name>beta-D-fructose 2,6-bisphosphate</name>
        <dbReference type="ChEBI" id="CHEBI:58579"/>
        <label>2</label>
        <note>allosteric activator; ligand shared with subunit alpha</note>
    </ligand>
</feature>
<accession>O94200</accession>
<dbReference type="EC" id="2.7.1.11" evidence="1"/>
<dbReference type="EMBL" id="AJ007637">
    <property type="protein sequence ID" value="CAB38867.1"/>
    <property type="molecule type" value="Genomic_DNA"/>
</dbReference>
<dbReference type="SMR" id="O94200"/>
<dbReference type="VEuPathDB" id="FungiDB:C7_01800C_A"/>
<dbReference type="VEuPathDB" id="FungiDB:CAWG_05531"/>
<dbReference type="UniPathway" id="UPA00109">
    <property type="reaction ID" value="UER00182"/>
</dbReference>
<dbReference type="GO" id="GO:0005945">
    <property type="term" value="C:6-phosphofructokinase complex"/>
    <property type="evidence" value="ECO:0007669"/>
    <property type="project" value="EnsemblFungi"/>
</dbReference>
<dbReference type="GO" id="GO:0005739">
    <property type="term" value="C:mitochondrion"/>
    <property type="evidence" value="ECO:0007669"/>
    <property type="project" value="EnsemblFungi"/>
</dbReference>
<dbReference type="GO" id="GO:0003872">
    <property type="term" value="F:6-phosphofructokinase activity"/>
    <property type="evidence" value="ECO:0007669"/>
    <property type="project" value="UniProtKB-UniRule"/>
</dbReference>
<dbReference type="GO" id="GO:0016208">
    <property type="term" value="F:AMP binding"/>
    <property type="evidence" value="ECO:0007669"/>
    <property type="project" value="TreeGrafter"/>
</dbReference>
<dbReference type="GO" id="GO:0005524">
    <property type="term" value="F:ATP binding"/>
    <property type="evidence" value="ECO:0007669"/>
    <property type="project" value="UniProtKB-KW"/>
</dbReference>
<dbReference type="GO" id="GO:0070095">
    <property type="term" value="F:fructose-6-phosphate binding"/>
    <property type="evidence" value="ECO:0007669"/>
    <property type="project" value="TreeGrafter"/>
</dbReference>
<dbReference type="GO" id="GO:0042802">
    <property type="term" value="F:identical protein binding"/>
    <property type="evidence" value="ECO:0007669"/>
    <property type="project" value="TreeGrafter"/>
</dbReference>
<dbReference type="GO" id="GO:0046872">
    <property type="term" value="F:metal ion binding"/>
    <property type="evidence" value="ECO:0007669"/>
    <property type="project" value="UniProtKB-KW"/>
</dbReference>
<dbReference type="GO" id="GO:0048029">
    <property type="term" value="F:monosaccharide binding"/>
    <property type="evidence" value="ECO:0007669"/>
    <property type="project" value="TreeGrafter"/>
</dbReference>
<dbReference type="GO" id="GO:0003729">
    <property type="term" value="F:mRNA binding"/>
    <property type="evidence" value="ECO:0007669"/>
    <property type="project" value="EnsemblFungi"/>
</dbReference>
<dbReference type="GO" id="GO:0046961">
    <property type="term" value="F:proton-transporting ATPase activity, rotational mechanism"/>
    <property type="evidence" value="ECO:0007669"/>
    <property type="project" value="EnsemblFungi"/>
</dbReference>
<dbReference type="GO" id="GO:0061621">
    <property type="term" value="P:canonical glycolysis"/>
    <property type="evidence" value="ECO:0007669"/>
    <property type="project" value="TreeGrafter"/>
</dbReference>
<dbReference type="GO" id="GO:0030388">
    <property type="term" value="P:fructose 1,6-bisphosphate metabolic process"/>
    <property type="evidence" value="ECO:0007669"/>
    <property type="project" value="TreeGrafter"/>
</dbReference>
<dbReference type="GO" id="GO:0006002">
    <property type="term" value="P:fructose 6-phosphate metabolic process"/>
    <property type="evidence" value="ECO:0007669"/>
    <property type="project" value="EnsemblFungi"/>
</dbReference>
<dbReference type="GO" id="GO:0007035">
    <property type="term" value="P:vacuolar acidification"/>
    <property type="evidence" value="ECO:0007669"/>
    <property type="project" value="EnsemblFungi"/>
</dbReference>
<dbReference type="GO" id="GO:0070072">
    <property type="term" value="P:vacuolar proton-transporting V-type ATPase complex assembly"/>
    <property type="evidence" value="ECO:0007669"/>
    <property type="project" value="EnsemblFungi"/>
</dbReference>
<dbReference type="FunFam" id="3.40.50.460:FF:000007">
    <property type="entry name" value="ATP-dependent 6-phosphofructokinase"/>
    <property type="match status" value="1"/>
</dbReference>
<dbReference type="FunFam" id="3.40.50.460:FF:000008">
    <property type="entry name" value="ATP-dependent 6-phosphofructokinase"/>
    <property type="match status" value="1"/>
</dbReference>
<dbReference type="Gene3D" id="3.40.50.450">
    <property type="match status" value="2"/>
</dbReference>
<dbReference type="Gene3D" id="3.10.180.10">
    <property type="entry name" value="2,3-Dihydroxybiphenyl 1,2-Dioxygenase, domain 1"/>
    <property type="match status" value="1"/>
</dbReference>
<dbReference type="Gene3D" id="3.40.50.460">
    <property type="entry name" value="Phosphofructokinase domain"/>
    <property type="match status" value="2"/>
</dbReference>
<dbReference type="HAMAP" id="MF_03184">
    <property type="entry name" value="Phosphofructokinase_I_E"/>
    <property type="match status" value="1"/>
</dbReference>
<dbReference type="InterPro" id="IPR009161">
    <property type="entry name" value="6-Pfructokinase_euk"/>
</dbReference>
<dbReference type="InterPro" id="IPR022953">
    <property type="entry name" value="ATP_PFK"/>
</dbReference>
<dbReference type="InterPro" id="IPR029068">
    <property type="entry name" value="Glyas_Bleomycin-R_OHBP_Dase"/>
</dbReference>
<dbReference type="InterPro" id="IPR015912">
    <property type="entry name" value="Phosphofructokinase_CS"/>
</dbReference>
<dbReference type="InterPro" id="IPR000023">
    <property type="entry name" value="Phosphofructokinase_dom"/>
</dbReference>
<dbReference type="InterPro" id="IPR035966">
    <property type="entry name" value="PKF_sf"/>
</dbReference>
<dbReference type="NCBIfam" id="TIGR02478">
    <property type="entry name" value="6PF1K_euk"/>
    <property type="match status" value="1"/>
</dbReference>
<dbReference type="PANTHER" id="PTHR13697:SF4">
    <property type="entry name" value="ATP-DEPENDENT 6-PHOSPHOFRUCTOKINASE"/>
    <property type="match status" value="1"/>
</dbReference>
<dbReference type="PANTHER" id="PTHR13697">
    <property type="entry name" value="PHOSPHOFRUCTOKINASE"/>
    <property type="match status" value="1"/>
</dbReference>
<dbReference type="Pfam" id="PF00365">
    <property type="entry name" value="PFK"/>
    <property type="match status" value="2"/>
</dbReference>
<dbReference type="PIRSF" id="PIRSF000533">
    <property type="entry name" value="ATP_PFK_euk"/>
    <property type="match status" value="1"/>
</dbReference>
<dbReference type="PRINTS" id="PR00476">
    <property type="entry name" value="PHFRCTKINASE"/>
</dbReference>
<dbReference type="SUPFAM" id="SSF54593">
    <property type="entry name" value="Glyoxalase/Bleomycin resistance protein/Dihydroxybiphenyl dioxygenase"/>
    <property type="match status" value="1"/>
</dbReference>
<dbReference type="SUPFAM" id="SSF53784">
    <property type="entry name" value="Phosphofructokinase"/>
    <property type="match status" value="2"/>
</dbReference>
<dbReference type="PROSITE" id="PS00433">
    <property type="entry name" value="PHOSPHOFRUCTOKINASE"/>
    <property type="match status" value="2"/>
</dbReference>